<evidence type="ECO:0000250" key="1">
    <source>
        <dbReference type="UniProtKB" id="P10760"/>
    </source>
</evidence>
<evidence type="ECO:0000250" key="2">
    <source>
        <dbReference type="UniProtKB" id="P23526"/>
    </source>
</evidence>
<evidence type="ECO:0000250" key="3">
    <source>
        <dbReference type="UniProtKB" id="P50247"/>
    </source>
</evidence>
<evidence type="ECO:0000305" key="4"/>
<sequence>MSDKLPYKVADIGLAAWGRKALDIAENEMPGLMRMREQYSASKPLKGARIAGCLHMTVETAVLIETLVALGAEVQWSSCNIFSTQDHAAAAIAKAGIPVYAWKGETDEEYLWCIEQTLYFKDGPLNMILDDGGDLTNLIHTKYPQLLSGIRGISEETTTGVHNLYKMMANGILKVPAINVNDSVTKSKFDNLYGCRESLIDGIKRATDVMIAGKVAVVAGYGDVGKGCAQALRGFGARVIITEIDPINALQAAMEGYEVTTMDEACQEGNIFVTTTGCVDIILGRHFEQMKDDAIVCNIGHFDVEIDVKWLNENAVEKVNIKPQVDRYRLKNGRRIILLAEGRLVNLGCAMGHPSFVMSNSFTNQVMAQIELWTHPDKYPVGVHFLPKKLDEAVAEAHLGKLNVKLTKLTEKQAQYLGMSRDGPFKPDHYRY</sequence>
<name>SAHH_MACFA</name>
<accession>Q4R596</accession>
<gene>
    <name type="primary">AHCY</name>
    <name type="ORF">QccE-12261</name>
</gene>
<protein>
    <recommendedName>
        <fullName>Adenosylhomocysteinase</fullName>
        <shortName>AdoHcyase</shortName>
        <ecNumber evidence="1">3.13.2.1</ecNumber>
    </recommendedName>
    <alternativeName>
        <fullName>S-adenosyl-L-homocysteine hydrolase</fullName>
    </alternativeName>
</protein>
<keyword id="KW-0007">Acetylation</keyword>
<keyword id="KW-0186">Copper</keyword>
<keyword id="KW-0963">Cytoplasm</keyword>
<keyword id="KW-0256">Endoplasmic reticulum</keyword>
<keyword id="KW-0378">Hydrolase</keyword>
<keyword id="KW-0379">Hydroxylation</keyword>
<keyword id="KW-0520">NAD</keyword>
<keyword id="KW-0539">Nucleus</keyword>
<keyword id="KW-0554">One-carbon metabolism</keyword>
<keyword id="KW-0597">Phosphoprotein</keyword>
<keyword id="KW-1185">Reference proteome</keyword>
<reference key="1">
    <citation type="submission" date="2005-06" db="EMBL/GenBank/DDBJ databases">
        <title>DNA sequences of macaque genes expressed in brain or testis and its evolutionary implications.</title>
        <authorList>
            <consortium name="International consortium for macaque cDNA sequencing and analysis"/>
        </authorList>
    </citation>
    <scope>NUCLEOTIDE SEQUENCE [LARGE SCALE MRNA]</scope>
    <source>
        <tissue>Brain cortex</tissue>
    </source>
</reference>
<feature type="initiator methionine" description="Removed" evidence="2">
    <location>
        <position position="1"/>
    </location>
</feature>
<feature type="chain" id="PRO_0000260218" description="Adenosylhomocysteinase">
    <location>
        <begin position="2"/>
        <end position="432"/>
    </location>
</feature>
<feature type="region of interest" description="NAD binding" evidence="1">
    <location>
        <begin position="183"/>
        <end position="350"/>
    </location>
</feature>
<feature type="binding site" evidence="1">
    <location>
        <position position="57"/>
    </location>
    <ligand>
        <name>substrate</name>
    </ligand>
</feature>
<feature type="binding site" evidence="1">
    <location>
        <position position="131"/>
    </location>
    <ligand>
        <name>substrate</name>
    </ligand>
</feature>
<feature type="binding site" evidence="1">
    <location>
        <position position="156"/>
    </location>
    <ligand>
        <name>substrate</name>
    </ligand>
</feature>
<feature type="binding site" evidence="1">
    <location>
        <position position="186"/>
    </location>
    <ligand>
        <name>substrate</name>
    </ligand>
</feature>
<feature type="binding site" evidence="1">
    <location>
        <position position="190"/>
    </location>
    <ligand>
        <name>substrate</name>
    </ligand>
</feature>
<feature type="modified residue" description="N-acetylserine" evidence="2">
    <location>
        <position position="2"/>
    </location>
</feature>
<feature type="modified residue" description="Phosphoserine" evidence="2">
    <location>
        <position position="183"/>
    </location>
</feature>
<feature type="modified residue" description="N6-(2-hydroxyisobutyryl)lysine" evidence="2">
    <location>
        <position position="186"/>
    </location>
</feature>
<feature type="modified residue" description="Phosphotyrosine" evidence="3">
    <location>
        <position position="193"/>
    </location>
</feature>
<comment type="function">
    <text evidence="1 3">Catalyzes the hydrolysis of S-adenosyl-L-homocysteine to form adenosine and homocysteine (By similarity). Binds copper ions (By similarity).</text>
</comment>
<comment type="catalytic activity">
    <reaction evidence="1">
        <text>S-adenosyl-L-homocysteine + H2O = L-homocysteine + adenosine</text>
        <dbReference type="Rhea" id="RHEA:21708"/>
        <dbReference type="ChEBI" id="CHEBI:15377"/>
        <dbReference type="ChEBI" id="CHEBI:16335"/>
        <dbReference type="ChEBI" id="CHEBI:57856"/>
        <dbReference type="ChEBI" id="CHEBI:58199"/>
        <dbReference type="EC" id="3.13.2.1"/>
    </reaction>
    <physiologicalReaction direction="left-to-right" evidence="1">
        <dbReference type="Rhea" id="RHEA:21709"/>
    </physiologicalReaction>
</comment>
<comment type="cofactor">
    <cofactor evidence="1">
        <name>NAD(+)</name>
        <dbReference type="ChEBI" id="CHEBI:57540"/>
    </cofactor>
    <text evidence="1">Binds 1 NAD(+) per subunit.</text>
</comment>
<comment type="pathway">
    <text>Amino-acid biosynthesis; L-homocysteine biosynthesis; L-homocysteine from S-adenosyl-L-homocysteine: step 1/1.</text>
</comment>
<comment type="subunit">
    <text evidence="1 2">Homotetramer. Interaction with AHCYL1 (By similarity).</text>
</comment>
<comment type="subcellular location">
    <subcellularLocation>
        <location evidence="2">Cytoplasm</location>
    </subcellularLocation>
    <subcellularLocation>
        <location evidence="2">Melanosome</location>
    </subcellularLocation>
    <subcellularLocation>
        <location evidence="2">Nucleus</location>
    </subcellularLocation>
    <subcellularLocation>
        <location evidence="2">Endoplasmic reticulum</location>
    </subcellularLocation>
</comment>
<comment type="similarity">
    <text evidence="4">Belongs to the adenosylhomocysteinase family.</text>
</comment>
<proteinExistence type="evidence at transcript level"/>
<dbReference type="EC" id="3.13.2.1" evidence="1"/>
<dbReference type="EMBL" id="AB169648">
    <property type="protein sequence ID" value="BAE01729.1"/>
    <property type="molecule type" value="mRNA"/>
</dbReference>
<dbReference type="RefSeq" id="NP_001270215.1">
    <property type="nucleotide sequence ID" value="NM_001283286.1"/>
</dbReference>
<dbReference type="RefSeq" id="XP_045218723.1">
    <property type="nucleotide sequence ID" value="XM_045362788.2"/>
</dbReference>
<dbReference type="SMR" id="Q4R596"/>
<dbReference type="STRING" id="9541.ENSMFAP00000017252"/>
<dbReference type="Ensembl" id="ENSMFAT00000067786.2">
    <property type="protein sequence ID" value="ENSMFAP00000017246.1"/>
    <property type="gene ID" value="ENSMFAG00000031669.2"/>
</dbReference>
<dbReference type="GeneID" id="101865247"/>
<dbReference type="VEuPathDB" id="HostDB:ENSMFAG00000031669"/>
<dbReference type="eggNOG" id="KOG1370">
    <property type="taxonomic scope" value="Eukaryota"/>
</dbReference>
<dbReference type="GeneTree" id="ENSGT00950000182981"/>
<dbReference type="OMA" id="YIGVTVE"/>
<dbReference type="UniPathway" id="UPA00314">
    <property type="reaction ID" value="UER00076"/>
</dbReference>
<dbReference type="Proteomes" id="UP000233100">
    <property type="component" value="Chromosome 10"/>
</dbReference>
<dbReference type="Bgee" id="ENSMFAG00000031669">
    <property type="expression patterns" value="Expressed in liver and 13 other cell types or tissues"/>
</dbReference>
<dbReference type="GO" id="GO:0005829">
    <property type="term" value="C:cytosol"/>
    <property type="evidence" value="ECO:0007669"/>
    <property type="project" value="Ensembl"/>
</dbReference>
<dbReference type="GO" id="GO:0005783">
    <property type="term" value="C:endoplasmic reticulum"/>
    <property type="evidence" value="ECO:0007669"/>
    <property type="project" value="UniProtKB-SubCell"/>
</dbReference>
<dbReference type="GO" id="GO:0042470">
    <property type="term" value="C:melanosome"/>
    <property type="evidence" value="ECO:0007669"/>
    <property type="project" value="UniProtKB-SubCell"/>
</dbReference>
<dbReference type="GO" id="GO:0005634">
    <property type="term" value="C:nucleus"/>
    <property type="evidence" value="ECO:0007669"/>
    <property type="project" value="UniProtKB-SubCell"/>
</dbReference>
<dbReference type="GO" id="GO:0004013">
    <property type="term" value="F:adenosylhomocysteinase activity"/>
    <property type="evidence" value="ECO:0000250"/>
    <property type="project" value="UniProtKB"/>
</dbReference>
<dbReference type="GO" id="GO:0051287">
    <property type="term" value="F:NAD binding"/>
    <property type="evidence" value="ECO:0000250"/>
    <property type="project" value="UniProtKB"/>
</dbReference>
<dbReference type="GO" id="GO:0006730">
    <property type="term" value="P:one-carbon metabolic process"/>
    <property type="evidence" value="ECO:0007669"/>
    <property type="project" value="UniProtKB-KW"/>
</dbReference>
<dbReference type="GO" id="GO:0033353">
    <property type="term" value="P:S-adenosylmethionine cycle"/>
    <property type="evidence" value="ECO:0007669"/>
    <property type="project" value="TreeGrafter"/>
</dbReference>
<dbReference type="CDD" id="cd00401">
    <property type="entry name" value="SAHH"/>
    <property type="match status" value="1"/>
</dbReference>
<dbReference type="FunFam" id="3.40.50.1480:FF:000004">
    <property type="entry name" value="Adenosylhomocysteinase"/>
    <property type="match status" value="1"/>
</dbReference>
<dbReference type="FunFam" id="3.40.50.720:FF:000004">
    <property type="entry name" value="Adenosylhomocysteinase"/>
    <property type="match status" value="1"/>
</dbReference>
<dbReference type="Gene3D" id="3.40.50.1480">
    <property type="entry name" value="Adenosylhomocysteinase-like"/>
    <property type="match status" value="3"/>
</dbReference>
<dbReference type="Gene3D" id="3.40.50.720">
    <property type="entry name" value="NAD(P)-binding Rossmann-like Domain"/>
    <property type="match status" value="1"/>
</dbReference>
<dbReference type="HAMAP" id="MF_00563">
    <property type="entry name" value="AdoHcyase"/>
    <property type="match status" value="1"/>
</dbReference>
<dbReference type="InterPro" id="IPR042172">
    <property type="entry name" value="Adenosylhomocyst_ase-like_sf"/>
</dbReference>
<dbReference type="InterPro" id="IPR000043">
    <property type="entry name" value="Adenosylhomocysteinase-like"/>
</dbReference>
<dbReference type="InterPro" id="IPR015878">
    <property type="entry name" value="Ado_hCys_hydrolase_NAD-bd"/>
</dbReference>
<dbReference type="InterPro" id="IPR036291">
    <property type="entry name" value="NAD(P)-bd_dom_sf"/>
</dbReference>
<dbReference type="InterPro" id="IPR020082">
    <property type="entry name" value="S-Ado-L-homoCys_hydrolase_CS"/>
</dbReference>
<dbReference type="NCBIfam" id="TIGR00936">
    <property type="entry name" value="ahcY"/>
    <property type="match status" value="1"/>
</dbReference>
<dbReference type="NCBIfam" id="NF004005">
    <property type="entry name" value="PRK05476.2-3"/>
    <property type="match status" value="1"/>
</dbReference>
<dbReference type="PANTHER" id="PTHR23420">
    <property type="entry name" value="ADENOSYLHOMOCYSTEINASE"/>
    <property type="match status" value="1"/>
</dbReference>
<dbReference type="PANTHER" id="PTHR23420:SF0">
    <property type="entry name" value="ADENOSYLHOMOCYSTEINASE"/>
    <property type="match status" value="1"/>
</dbReference>
<dbReference type="Pfam" id="PF05221">
    <property type="entry name" value="AdoHcyase"/>
    <property type="match status" value="1"/>
</dbReference>
<dbReference type="Pfam" id="PF00670">
    <property type="entry name" value="AdoHcyase_NAD"/>
    <property type="match status" value="1"/>
</dbReference>
<dbReference type="PIRSF" id="PIRSF001109">
    <property type="entry name" value="Ad_hcy_hydrolase"/>
    <property type="match status" value="1"/>
</dbReference>
<dbReference type="SMART" id="SM00996">
    <property type="entry name" value="AdoHcyase"/>
    <property type="match status" value="1"/>
</dbReference>
<dbReference type="SMART" id="SM00997">
    <property type="entry name" value="AdoHcyase_NAD"/>
    <property type="match status" value="1"/>
</dbReference>
<dbReference type="SUPFAM" id="SSF52283">
    <property type="entry name" value="Formate/glycerate dehydrogenase catalytic domain-like"/>
    <property type="match status" value="1"/>
</dbReference>
<dbReference type="SUPFAM" id="SSF51735">
    <property type="entry name" value="NAD(P)-binding Rossmann-fold domains"/>
    <property type="match status" value="1"/>
</dbReference>
<dbReference type="PROSITE" id="PS00738">
    <property type="entry name" value="ADOHCYASE_1"/>
    <property type="match status" value="1"/>
</dbReference>
<dbReference type="PROSITE" id="PS00739">
    <property type="entry name" value="ADOHCYASE_2"/>
    <property type="match status" value="1"/>
</dbReference>
<organism>
    <name type="scientific">Macaca fascicularis</name>
    <name type="common">Crab-eating macaque</name>
    <name type="synonym">Cynomolgus monkey</name>
    <dbReference type="NCBI Taxonomy" id="9541"/>
    <lineage>
        <taxon>Eukaryota</taxon>
        <taxon>Metazoa</taxon>
        <taxon>Chordata</taxon>
        <taxon>Craniata</taxon>
        <taxon>Vertebrata</taxon>
        <taxon>Euteleostomi</taxon>
        <taxon>Mammalia</taxon>
        <taxon>Eutheria</taxon>
        <taxon>Euarchontoglires</taxon>
        <taxon>Primates</taxon>
        <taxon>Haplorrhini</taxon>
        <taxon>Catarrhini</taxon>
        <taxon>Cercopithecidae</taxon>
        <taxon>Cercopithecinae</taxon>
        <taxon>Macaca</taxon>
    </lineage>
</organism>